<evidence type="ECO:0000250" key="1">
    <source>
        <dbReference type="UniProtKB" id="P17980"/>
    </source>
</evidence>
<evidence type="ECO:0000255" key="2"/>
<evidence type="ECO:0000269" key="3">
    <source>
    </source>
</evidence>
<evidence type="ECO:0000305" key="4"/>
<feature type="chain" id="PRO_0000084699" description="26S proteasome regulatory subunit 6A">
    <location>
        <begin position="1"/>
        <end position="442"/>
    </location>
</feature>
<feature type="binding site" evidence="2">
    <location>
        <begin position="230"/>
        <end position="237"/>
    </location>
    <ligand>
        <name>ATP</name>
        <dbReference type="ChEBI" id="CHEBI:30616"/>
    </ligand>
</feature>
<feature type="modified residue" description="Phosphoserine" evidence="1">
    <location>
        <position position="12"/>
    </location>
</feature>
<feature type="modified residue" description="Phosphoserine" evidence="1">
    <location>
        <position position="379"/>
    </location>
</feature>
<feature type="sequence conflict" description="In Ref. 1; BAA32559 and 2; BAB16347." evidence="4" ref="1 2">
    <original>E</original>
    <variation>D</variation>
    <location>
        <position position="170"/>
    </location>
</feature>
<feature type="sequence conflict" description="In Ref. 1; BAA32559 and 2; BAB16347." evidence="4" ref="1 2">
    <original>C</original>
    <variation>S</variation>
    <location>
        <position position="399"/>
    </location>
</feature>
<feature type="sequence conflict" description="In Ref. 1; BAA32559 and 2; BAB16347." evidence="4" ref="1 2">
    <original>Y</original>
    <variation>H</variation>
    <location>
        <position position="423"/>
    </location>
</feature>
<sequence length="442" mass="49549">MQEMNLLPTPESPVTRQEKMATVWDEAEQDGIGEEVLKMSTEEIVQRTRLLDSEIKIMKSEVLRVTHELQAMKDKIKENSEKIKVNKTLPYLVSNVIELLDVDPNDQEEDGANIDLDSQRKGKCAVIKTSTRQTYFLPVIGLVDAEKLKPGDLVGVNKDSYLILETLPTEYDSRVKAMEVDERPTEQYSDIGGLDKQIQELVEAIVLPMNHKEKFENLGIQPPKGVLMYGPPGTGKTLLARACAAQTKATFLKLAGPQLVQMFIGDGAKLVRDAFALAKEKAPSIIFIDELDAIGTKRFDSEKAGDREVQRTMLELLNQLDGFQPNTQVKVIAATNRVDILDPALLRSGRLDRKIEFPMPNEEARARIMQIHSRKMNVSPDVNYEELARCTDDFNGAQCKAVCVEAGMIALRRGATELTHEDYMEGILEVQAKKKANLQYYA</sequence>
<protein>
    <recommendedName>
        <fullName>26S proteasome regulatory subunit 6A</fullName>
    </recommendedName>
    <alternativeName>
        <fullName>26S proteasome AAA-ATPase subunit RPT5</fullName>
    </alternativeName>
    <alternativeName>
        <fullName>Proteasome 26S subunit ATPase 3</fullName>
    </alternativeName>
    <alternativeName>
        <fullName>Tat-binding protein 1</fullName>
        <shortName>TBP-1</shortName>
    </alternativeName>
</protein>
<accession>O88685</accession>
<accession>Q99JN8</accession>
<name>PRS6A_MOUSE</name>
<keyword id="KW-0067">ATP-binding</keyword>
<keyword id="KW-0963">Cytoplasm</keyword>
<keyword id="KW-0547">Nucleotide-binding</keyword>
<keyword id="KW-0539">Nucleus</keyword>
<keyword id="KW-0597">Phosphoprotein</keyword>
<keyword id="KW-0647">Proteasome</keyword>
<keyword id="KW-1185">Reference proteome</keyword>
<gene>
    <name type="primary">Psmc3</name>
    <name type="synonym">Tbp1</name>
</gene>
<dbReference type="EMBL" id="D49686">
    <property type="protein sequence ID" value="BAA32559.1"/>
    <property type="molecule type" value="mRNA"/>
</dbReference>
<dbReference type="EMBL" id="AB040858">
    <property type="protein sequence ID" value="BAB16347.1"/>
    <property type="molecule type" value="Genomic_DNA"/>
</dbReference>
<dbReference type="EMBL" id="AY902337">
    <property type="protein sequence ID" value="AAX90622.1"/>
    <property type="molecule type" value="Genomic_DNA"/>
</dbReference>
<dbReference type="EMBL" id="AL691439">
    <property type="status" value="NOT_ANNOTATED_CDS"/>
    <property type="molecule type" value="Genomic_DNA"/>
</dbReference>
<dbReference type="EMBL" id="BC005783">
    <property type="protein sequence ID" value="AAH05783.1"/>
    <property type="molecule type" value="mRNA"/>
</dbReference>
<dbReference type="CCDS" id="CCDS16423.1"/>
<dbReference type="RefSeq" id="NP_032974.2">
    <property type="nucleotide sequence ID" value="NM_008948.2"/>
</dbReference>
<dbReference type="SMR" id="O88685"/>
<dbReference type="BioGRID" id="202428">
    <property type="interactions" value="66"/>
</dbReference>
<dbReference type="FunCoup" id="O88685">
    <property type="interactions" value="2855"/>
</dbReference>
<dbReference type="IntAct" id="O88685">
    <property type="interactions" value="4"/>
</dbReference>
<dbReference type="MINT" id="O88685"/>
<dbReference type="STRING" id="10090.ENSMUSP00000071054"/>
<dbReference type="GlyGen" id="O88685">
    <property type="glycosylation" value="1 site, 1 N-linked glycan (1 site)"/>
</dbReference>
<dbReference type="iPTMnet" id="O88685"/>
<dbReference type="MetOSite" id="O88685"/>
<dbReference type="PhosphoSitePlus" id="O88685"/>
<dbReference type="SwissPalm" id="O88685"/>
<dbReference type="CPTAC" id="non-CPTAC-3856"/>
<dbReference type="jPOST" id="O88685"/>
<dbReference type="PaxDb" id="10090-ENSMUSP00000071054"/>
<dbReference type="PeptideAtlas" id="O88685"/>
<dbReference type="ProteomicsDB" id="291805"/>
<dbReference type="Pumba" id="O88685"/>
<dbReference type="Antibodypedia" id="1816">
    <property type="antibodies" value="559 antibodies from 36 providers"/>
</dbReference>
<dbReference type="DNASU" id="19182"/>
<dbReference type="Ensembl" id="ENSMUST00000067663.14">
    <property type="protein sequence ID" value="ENSMUSP00000071054.8"/>
    <property type="gene ID" value="ENSMUSG00000002102.16"/>
</dbReference>
<dbReference type="GeneID" id="19182"/>
<dbReference type="KEGG" id="mmu:19182"/>
<dbReference type="UCSC" id="uc008kuf.2">
    <property type="organism name" value="mouse"/>
</dbReference>
<dbReference type="AGR" id="MGI:1098754"/>
<dbReference type="CTD" id="5702"/>
<dbReference type="MGI" id="MGI:1098754">
    <property type="gene designation" value="Psmc3"/>
</dbReference>
<dbReference type="VEuPathDB" id="HostDB:ENSMUSG00000002102"/>
<dbReference type="eggNOG" id="KOG0652">
    <property type="taxonomic scope" value="Eukaryota"/>
</dbReference>
<dbReference type="GeneTree" id="ENSGT01020000230346"/>
<dbReference type="InParanoid" id="O88685"/>
<dbReference type="OMA" id="NKISHEH"/>
<dbReference type="OrthoDB" id="9443236at2759"/>
<dbReference type="TreeFam" id="TF105648"/>
<dbReference type="BRENDA" id="5.6.1.5">
    <property type="organism ID" value="3474"/>
</dbReference>
<dbReference type="Reactome" id="R-MMU-1169091">
    <property type="pathway name" value="Activation of NF-kappaB in B cells"/>
</dbReference>
<dbReference type="Reactome" id="R-MMU-1234176">
    <property type="pathway name" value="Oxygen-dependent proline hydroxylation of Hypoxia-inducible Factor Alpha"/>
</dbReference>
<dbReference type="Reactome" id="R-MMU-1236978">
    <property type="pathway name" value="Cross-presentation of soluble exogenous antigens (endosomes)"/>
</dbReference>
<dbReference type="Reactome" id="R-MMU-174084">
    <property type="pathway name" value="Autodegradation of Cdh1 by Cdh1:APC/C"/>
</dbReference>
<dbReference type="Reactome" id="R-MMU-174154">
    <property type="pathway name" value="APC/C:Cdc20 mediated degradation of Securin"/>
</dbReference>
<dbReference type="Reactome" id="R-MMU-174178">
    <property type="pathway name" value="APC/C:Cdh1 mediated degradation of Cdc20 and other APC/C:Cdh1 targeted proteins in late mitosis/early G1"/>
</dbReference>
<dbReference type="Reactome" id="R-MMU-174184">
    <property type="pathway name" value="Cdc20:Phospho-APC/C mediated degradation of Cyclin A"/>
</dbReference>
<dbReference type="Reactome" id="R-MMU-187577">
    <property type="pathway name" value="SCF(Skp2)-mediated degradation of p27/p21"/>
</dbReference>
<dbReference type="Reactome" id="R-MMU-195253">
    <property type="pathway name" value="Degradation of beta-catenin by the destruction complex"/>
</dbReference>
<dbReference type="Reactome" id="R-MMU-202424">
    <property type="pathway name" value="Downstream TCR signaling"/>
</dbReference>
<dbReference type="Reactome" id="R-MMU-2467813">
    <property type="pathway name" value="Separation of Sister Chromatids"/>
</dbReference>
<dbReference type="Reactome" id="R-MMU-2871837">
    <property type="pathway name" value="FCERI mediated NF-kB activation"/>
</dbReference>
<dbReference type="Reactome" id="R-MMU-349425">
    <property type="pathway name" value="Autodegradation of the E3 ubiquitin ligase COP1"/>
</dbReference>
<dbReference type="Reactome" id="R-MMU-350562">
    <property type="pathway name" value="Regulation of ornithine decarboxylase (ODC)"/>
</dbReference>
<dbReference type="Reactome" id="R-MMU-382556">
    <property type="pathway name" value="ABC-family proteins mediated transport"/>
</dbReference>
<dbReference type="Reactome" id="R-MMU-450408">
    <property type="pathway name" value="AUF1 (hnRNP D0) binds and destabilizes mRNA"/>
</dbReference>
<dbReference type="Reactome" id="R-MMU-4608870">
    <property type="pathway name" value="Asymmetric localization of PCP proteins"/>
</dbReference>
<dbReference type="Reactome" id="R-MMU-4641257">
    <property type="pathway name" value="Degradation of AXIN"/>
</dbReference>
<dbReference type="Reactome" id="R-MMU-4641258">
    <property type="pathway name" value="Degradation of DVL"/>
</dbReference>
<dbReference type="Reactome" id="R-MMU-5358346">
    <property type="pathway name" value="Hedgehog ligand biogenesis"/>
</dbReference>
<dbReference type="Reactome" id="R-MMU-5607761">
    <property type="pathway name" value="Dectin-1 mediated noncanonical NF-kB signaling"/>
</dbReference>
<dbReference type="Reactome" id="R-MMU-5607764">
    <property type="pathway name" value="CLEC7A (Dectin-1) signaling"/>
</dbReference>
<dbReference type="Reactome" id="R-MMU-5610780">
    <property type="pathway name" value="Degradation of GLI1 by the proteasome"/>
</dbReference>
<dbReference type="Reactome" id="R-MMU-5610785">
    <property type="pathway name" value="GLI3 is processed to GLI3R by the proteasome"/>
</dbReference>
<dbReference type="Reactome" id="R-MMU-5632684">
    <property type="pathway name" value="Hedgehog 'on' state"/>
</dbReference>
<dbReference type="Reactome" id="R-MMU-5658442">
    <property type="pathway name" value="Regulation of RAS by GAPs"/>
</dbReference>
<dbReference type="Reactome" id="R-MMU-5668541">
    <property type="pathway name" value="TNFR2 non-canonical NF-kB pathway"/>
</dbReference>
<dbReference type="Reactome" id="R-MMU-5676590">
    <property type="pathway name" value="NIK--&gt;noncanonical NF-kB signaling"/>
</dbReference>
<dbReference type="Reactome" id="R-MMU-5687128">
    <property type="pathway name" value="MAPK6/MAPK4 signaling"/>
</dbReference>
<dbReference type="Reactome" id="R-MMU-5689603">
    <property type="pathway name" value="UCH proteinases"/>
</dbReference>
<dbReference type="Reactome" id="R-MMU-5689880">
    <property type="pathway name" value="Ub-specific processing proteases"/>
</dbReference>
<dbReference type="Reactome" id="R-MMU-6798695">
    <property type="pathway name" value="Neutrophil degranulation"/>
</dbReference>
<dbReference type="Reactome" id="R-MMU-68867">
    <property type="pathway name" value="Assembly of the pre-replicative complex"/>
</dbReference>
<dbReference type="Reactome" id="R-MMU-68949">
    <property type="pathway name" value="Orc1 removal from chromatin"/>
</dbReference>
<dbReference type="Reactome" id="R-MMU-69017">
    <property type="pathway name" value="CDK-mediated phosphorylation and removal of Cdc6"/>
</dbReference>
<dbReference type="Reactome" id="R-MMU-69481">
    <property type="pathway name" value="G2/M Checkpoints"/>
</dbReference>
<dbReference type="Reactome" id="R-MMU-69601">
    <property type="pathway name" value="Ubiquitin Mediated Degradation of Phosphorylated Cdc25A"/>
</dbReference>
<dbReference type="Reactome" id="R-MMU-75815">
    <property type="pathway name" value="Ubiquitin-dependent degradation of Cyclin D"/>
</dbReference>
<dbReference type="Reactome" id="R-MMU-8852276">
    <property type="pathway name" value="The role of GTSE1 in G2/M progression after G2 checkpoint"/>
</dbReference>
<dbReference type="Reactome" id="R-MMU-8854050">
    <property type="pathway name" value="FBXL7 down-regulates AURKA during mitotic entry and in early mitosis"/>
</dbReference>
<dbReference type="Reactome" id="R-MMU-8939236">
    <property type="pathway name" value="RUNX1 regulates transcription of genes involved in differentiation of HSCs"/>
</dbReference>
<dbReference type="Reactome" id="R-MMU-8939902">
    <property type="pathway name" value="Regulation of RUNX2 expression and activity"/>
</dbReference>
<dbReference type="Reactome" id="R-MMU-8941858">
    <property type="pathway name" value="Regulation of RUNX3 expression and activity"/>
</dbReference>
<dbReference type="Reactome" id="R-MMU-8948751">
    <property type="pathway name" value="Regulation of PTEN stability and activity"/>
</dbReference>
<dbReference type="Reactome" id="R-MMU-8951664">
    <property type="pathway name" value="Neddylation"/>
</dbReference>
<dbReference type="Reactome" id="R-MMU-9020702">
    <property type="pathway name" value="Interleukin-1 signaling"/>
</dbReference>
<dbReference type="Reactome" id="R-MMU-9755511">
    <property type="pathway name" value="KEAP1-NFE2L2 pathway"/>
</dbReference>
<dbReference type="Reactome" id="R-MMU-9762114">
    <property type="pathway name" value="GSK3B and BTRC:CUL1-mediated-degradation of NFE2L2"/>
</dbReference>
<dbReference type="Reactome" id="R-MMU-983168">
    <property type="pathway name" value="Antigen processing: Ubiquitination &amp; Proteasome degradation"/>
</dbReference>
<dbReference type="Reactome" id="R-MMU-9907900">
    <property type="pathway name" value="Proteasome assembly"/>
</dbReference>
<dbReference type="BioGRID-ORCS" id="19182">
    <property type="hits" value="27 hits in 78 CRISPR screens"/>
</dbReference>
<dbReference type="ChiTaRS" id="Psmc3">
    <property type="organism name" value="mouse"/>
</dbReference>
<dbReference type="PRO" id="PR:O88685"/>
<dbReference type="Proteomes" id="UP000000589">
    <property type="component" value="Chromosome 2"/>
</dbReference>
<dbReference type="RNAct" id="O88685">
    <property type="molecule type" value="protein"/>
</dbReference>
<dbReference type="Bgee" id="ENSMUSG00000002102">
    <property type="expression patterns" value="Expressed in floor plate of midbrain and 289 other cell types or tissues"/>
</dbReference>
<dbReference type="ExpressionAtlas" id="O88685">
    <property type="expression patterns" value="baseline and differential"/>
</dbReference>
<dbReference type="GO" id="GO:0005634">
    <property type="term" value="C:nucleus"/>
    <property type="evidence" value="ECO:0007669"/>
    <property type="project" value="UniProtKB-SubCell"/>
</dbReference>
<dbReference type="GO" id="GO:0000932">
    <property type="term" value="C:P-body"/>
    <property type="evidence" value="ECO:0000314"/>
    <property type="project" value="UniProtKB"/>
</dbReference>
<dbReference type="GO" id="GO:0022624">
    <property type="term" value="C:proteasome accessory complex"/>
    <property type="evidence" value="ECO:0000314"/>
    <property type="project" value="UniProtKB"/>
</dbReference>
<dbReference type="GO" id="GO:0005524">
    <property type="term" value="F:ATP binding"/>
    <property type="evidence" value="ECO:0007669"/>
    <property type="project" value="UniProtKB-KW"/>
</dbReference>
<dbReference type="GO" id="GO:0016887">
    <property type="term" value="F:ATP hydrolysis activity"/>
    <property type="evidence" value="ECO:0007669"/>
    <property type="project" value="InterPro"/>
</dbReference>
<dbReference type="GO" id="GO:0042802">
    <property type="term" value="F:identical protein binding"/>
    <property type="evidence" value="ECO:0007669"/>
    <property type="project" value="Ensembl"/>
</dbReference>
<dbReference type="GO" id="GO:0001824">
    <property type="term" value="P:blastocyst development"/>
    <property type="evidence" value="ECO:0000315"/>
    <property type="project" value="MGI"/>
</dbReference>
<dbReference type="GO" id="GO:0043921">
    <property type="term" value="P:modulation by host of viral transcription"/>
    <property type="evidence" value="ECO:0007669"/>
    <property type="project" value="Ensembl"/>
</dbReference>
<dbReference type="GO" id="GO:0045944">
    <property type="term" value="P:positive regulation of transcription by RNA polymerase II"/>
    <property type="evidence" value="ECO:0007669"/>
    <property type="project" value="Ensembl"/>
</dbReference>
<dbReference type="FunFam" id="1.10.8.60:FF:000009">
    <property type="entry name" value="26S protease regulatory subunit 6A"/>
    <property type="match status" value="1"/>
</dbReference>
<dbReference type="FunFam" id="2.40.50.140:FF:000076">
    <property type="entry name" value="26S protease regulatory subunit 6A"/>
    <property type="match status" value="1"/>
</dbReference>
<dbReference type="FunFam" id="3.40.50.300:FF:000037">
    <property type="entry name" value="26S protease regulatory subunit 6A"/>
    <property type="match status" value="1"/>
</dbReference>
<dbReference type="Gene3D" id="1.10.8.60">
    <property type="match status" value="1"/>
</dbReference>
<dbReference type="Gene3D" id="2.40.50.140">
    <property type="entry name" value="Nucleic acid-binding proteins"/>
    <property type="match status" value="1"/>
</dbReference>
<dbReference type="Gene3D" id="3.40.50.300">
    <property type="entry name" value="P-loop containing nucleotide triphosphate hydrolases"/>
    <property type="match status" value="1"/>
</dbReference>
<dbReference type="InterPro" id="IPR050221">
    <property type="entry name" value="26S_Proteasome_ATPase"/>
</dbReference>
<dbReference type="InterPro" id="IPR003593">
    <property type="entry name" value="AAA+_ATPase"/>
</dbReference>
<dbReference type="InterPro" id="IPR041569">
    <property type="entry name" value="AAA_lid_3"/>
</dbReference>
<dbReference type="InterPro" id="IPR003959">
    <property type="entry name" value="ATPase_AAA_core"/>
</dbReference>
<dbReference type="InterPro" id="IPR003960">
    <property type="entry name" value="ATPase_AAA_CS"/>
</dbReference>
<dbReference type="InterPro" id="IPR012340">
    <property type="entry name" value="NA-bd_OB-fold"/>
</dbReference>
<dbReference type="InterPro" id="IPR027417">
    <property type="entry name" value="P-loop_NTPase"/>
</dbReference>
<dbReference type="InterPro" id="IPR032501">
    <property type="entry name" value="Prot_ATP_ID_OB_2nd"/>
</dbReference>
<dbReference type="PANTHER" id="PTHR23073">
    <property type="entry name" value="26S PROTEASOME REGULATORY SUBUNIT"/>
    <property type="match status" value="1"/>
</dbReference>
<dbReference type="Pfam" id="PF00004">
    <property type="entry name" value="AAA"/>
    <property type="match status" value="1"/>
</dbReference>
<dbReference type="Pfam" id="PF17862">
    <property type="entry name" value="AAA_lid_3"/>
    <property type="match status" value="1"/>
</dbReference>
<dbReference type="Pfam" id="PF16450">
    <property type="entry name" value="Prot_ATP_ID_OB_C"/>
    <property type="match status" value="1"/>
</dbReference>
<dbReference type="SMART" id="SM00382">
    <property type="entry name" value="AAA"/>
    <property type="match status" value="1"/>
</dbReference>
<dbReference type="SUPFAM" id="SSF52540">
    <property type="entry name" value="P-loop containing nucleoside triphosphate hydrolases"/>
    <property type="match status" value="1"/>
</dbReference>
<dbReference type="PROSITE" id="PS00674">
    <property type="entry name" value="AAA"/>
    <property type="match status" value="1"/>
</dbReference>
<organism>
    <name type="scientific">Mus musculus</name>
    <name type="common">Mouse</name>
    <dbReference type="NCBI Taxonomy" id="10090"/>
    <lineage>
        <taxon>Eukaryota</taxon>
        <taxon>Metazoa</taxon>
        <taxon>Chordata</taxon>
        <taxon>Craniata</taxon>
        <taxon>Vertebrata</taxon>
        <taxon>Euteleostomi</taxon>
        <taxon>Mammalia</taxon>
        <taxon>Eutheria</taxon>
        <taxon>Euarchontoglires</taxon>
        <taxon>Glires</taxon>
        <taxon>Rodentia</taxon>
        <taxon>Myomorpha</taxon>
        <taxon>Muroidea</taxon>
        <taxon>Muridae</taxon>
        <taxon>Murinae</taxon>
        <taxon>Mus</taxon>
        <taxon>Mus</taxon>
    </lineage>
</organism>
<comment type="function">
    <text evidence="1">Component of the 26S proteasome, a multiprotein complex involved in the ATP-dependent degradation of ubiquitinated proteins. This complex plays a key role in the maintenance of protein homeostasis by removing misfolded or damaged proteins, which could impair cellular functions, and by removing proteins whose functions are no longer required. Therefore, the proteasome participates in numerous cellular processes, including cell cycle progression, apoptosis, or DNA damage repair. PSMC3 belongs to the heterohexameric ring of AAA (ATPases associated with diverse cellular activities) proteins that unfolds ubiquitinated target proteins that are concurrently translocated into a proteolytic chamber and degraded into peptides.</text>
</comment>
<comment type="subunit">
    <text evidence="1">Component of the 19S proteasome regulatory particle complex. The 26S proteasome consists of a 20S core particle (CP) and two 19S regulatory subunits (RP). The regulatory particle is made of a lid composed of 9 subunits, a base containing 6 ATPases including PSMC3 and few additional components. Interacts with PAAF1.</text>
</comment>
<comment type="subcellular location">
    <subcellularLocation>
        <location evidence="4">Cytoplasm</location>
    </subcellularLocation>
    <subcellularLocation>
        <location evidence="4">Nucleus</location>
    </subcellularLocation>
    <text evidence="3">Colocalizes with TRIM5 in cytoplasmic bodies.</text>
</comment>
<comment type="similarity">
    <text evidence="4">Belongs to the AAA ATPase family.</text>
</comment>
<proteinExistence type="evidence at protein level"/>
<reference key="1">
    <citation type="journal article" date="1998" name="Biochim. Biophys. Acta">
        <title>Cloning and heterogeneous in vivo expression of Tat binding protein-1 (TBP-1) in the mouse.</title>
        <authorList>
            <person name="Nakamura T."/>
            <person name="Tanaka T."/>
            <person name="Takagi H."/>
            <person name="Sato M."/>
        </authorList>
    </citation>
    <scope>NUCLEOTIDE SEQUENCE [MRNA]</scope>
    <source>
        <strain>ICR</strain>
        <tissue>Brain</tissue>
    </source>
</reference>
<reference key="2">
    <citation type="journal article" date="2000" name="Genomics">
        <title>Mouse proteasomal ATPases Psmc3 and Psmc4: genomic organization and gene targeting.</title>
        <authorList>
            <person name="Sakao Y."/>
            <person name="Kawai T."/>
            <person name="Takeuchi O."/>
            <person name="Copeland N.G."/>
            <person name="Gilbert D.J."/>
            <person name="Jenkins N.A."/>
            <person name="Takeda K."/>
            <person name="Akira S."/>
        </authorList>
    </citation>
    <scope>NUCLEOTIDE SEQUENCE [GENOMIC DNA]</scope>
</reference>
<reference key="3">
    <citation type="submission" date="2005-01" db="EMBL/GenBank/DDBJ databases">
        <title>Characterization of quantitative trait loci influencing growth and adiposity using congenic mouse strains.</title>
        <authorList>
            <person name="Farber C.R."/>
            <person name="Corva P.M."/>
            <person name="Medrano J.F."/>
        </authorList>
    </citation>
    <scope>NUCLEOTIDE SEQUENCE [GENOMIC DNA]</scope>
    <source>
        <strain>CAST/EiJ</strain>
        <tissue>Brain</tissue>
    </source>
</reference>
<reference key="4">
    <citation type="journal article" date="2009" name="PLoS Biol.">
        <title>Lineage-specific biology revealed by a finished genome assembly of the mouse.</title>
        <authorList>
            <person name="Church D.M."/>
            <person name="Goodstadt L."/>
            <person name="Hillier L.W."/>
            <person name="Zody M.C."/>
            <person name="Goldstein S."/>
            <person name="She X."/>
            <person name="Bult C.J."/>
            <person name="Agarwala R."/>
            <person name="Cherry J.L."/>
            <person name="DiCuccio M."/>
            <person name="Hlavina W."/>
            <person name="Kapustin Y."/>
            <person name="Meric P."/>
            <person name="Maglott D."/>
            <person name="Birtle Z."/>
            <person name="Marques A.C."/>
            <person name="Graves T."/>
            <person name="Zhou S."/>
            <person name="Teague B."/>
            <person name="Potamousis K."/>
            <person name="Churas C."/>
            <person name="Place M."/>
            <person name="Herschleb J."/>
            <person name="Runnheim R."/>
            <person name="Forrest D."/>
            <person name="Amos-Landgraf J."/>
            <person name="Schwartz D.C."/>
            <person name="Cheng Z."/>
            <person name="Lindblad-Toh K."/>
            <person name="Eichler E.E."/>
            <person name="Ponting C.P."/>
        </authorList>
    </citation>
    <scope>NUCLEOTIDE SEQUENCE [LARGE SCALE GENOMIC DNA]</scope>
    <source>
        <strain>C57BL/6J</strain>
    </source>
</reference>
<reference key="5">
    <citation type="journal article" date="2004" name="Genome Res.">
        <title>The status, quality, and expansion of the NIH full-length cDNA project: the Mammalian Gene Collection (MGC).</title>
        <authorList>
            <consortium name="The MGC Project Team"/>
        </authorList>
    </citation>
    <scope>NUCLEOTIDE SEQUENCE [LARGE SCALE MRNA]</scope>
    <source>
        <strain>FVB/N</strain>
        <tissue>Mammary tumor</tissue>
    </source>
</reference>
<reference key="6">
    <citation type="journal article" date="2006" name="Circ. Res.">
        <title>Mapping the murine cardiac 26S proteasome complexes.</title>
        <authorList>
            <person name="Gomes A.V."/>
            <person name="Zong C."/>
            <person name="Edmondson R.D."/>
            <person name="Li X."/>
            <person name="Stefani E."/>
            <person name="Zhang J."/>
            <person name="Jones R.C."/>
            <person name="Thyparambil S."/>
            <person name="Wang G.W."/>
            <person name="Qiao X."/>
            <person name="Bardag-Gorce F."/>
            <person name="Ping P."/>
        </authorList>
    </citation>
    <scope>IDENTIFICATION IN THE 19S PROTEASOME REGULATORY COMPLEX</scope>
</reference>
<reference key="7">
    <citation type="journal article" date="2010" name="Cell">
        <title>A tissue-specific atlas of mouse protein phosphorylation and expression.</title>
        <authorList>
            <person name="Huttlin E.L."/>
            <person name="Jedrychowski M.P."/>
            <person name="Elias J.E."/>
            <person name="Goswami T."/>
            <person name="Rad R."/>
            <person name="Beausoleil S.A."/>
            <person name="Villen J."/>
            <person name="Haas W."/>
            <person name="Sowa M.E."/>
            <person name="Gygi S.P."/>
        </authorList>
    </citation>
    <scope>IDENTIFICATION BY MASS SPECTROMETRY [LARGE SCALE ANALYSIS]</scope>
    <source>
        <tissue>Brain</tissue>
        <tissue>Brown adipose tissue</tissue>
        <tissue>Heart</tissue>
        <tissue>Kidney</tissue>
        <tissue>Liver</tissue>
        <tissue>Lung</tissue>
        <tissue>Pancreas</tissue>
        <tissue>Spleen</tissue>
        <tissue>Testis</tissue>
    </source>
</reference>
<reference key="8">
    <citation type="journal article" date="2011" name="Retrovirology">
        <title>TRIM5alpha associates with proteasomal subunits in cells while in complex with HIV-1 virions.</title>
        <authorList>
            <person name="Lukic Z."/>
            <person name="Hausmann S."/>
            <person name="Sebastian S."/>
            <person name="Rucci J."/>
            <person name="Sastri J."/>
            <person name="Robia S.L."/>
            <person name="Luban J."/>
            <person name="Campbell E.M."/>
        </authorList>
    </citation>
    <scope>SUBCELLULAR LOCATION</scope>
</reference>